<protein>
    <recommendedName>
        <fullName evidence="1">Pyridoxine/pyridoxamine 5'-phosphate oxidase</fullName>
        <ecNumber evidence="1">1.4.3.5</ecNumber>
    </recommendedName>
    <alternativeName>
        <fullName evidence="1">PNP/PMP oxidase</fullName>
        <shortName evidence="1">PNPOx</shortName>
    </alternativeName>
    <alternativeName>
        <fullName evidence="1">Pyridoxal 5'-phosphate synthase</fullName>
    </alternativeName>
</protein>
<dbReference type="EC" id="1.4.3.5" evidence="1"/>
<dbReference type="EMBL" id="AE004091">
    <property type="protein sequence ID" value="AAG04438.1"/>
    <property type="molecule type" value="Genomic_DNA"/>
</dbReference>
<dbReference type="PIR" id="F83513">
    <property type="entry name" value="F83513"/>
</dbReference>
<dbReference type="RefSeq" id="NP_249740.1">
    <property type="nucleotide sequence ID" value="NC_002516.2"/>
</dbReference>
<dbReference type="RefSeq" id="WP_003112518.1">
    <property type="nucleotide sequence ID" value="NZ_QZGE01000006.1"/>
</dbReference>
<dbReference type="SMR" id="Q9I4S5"/>
<dbReference type="FunCoup" id="Q9I4S5">
    <property type="interactions" value="641"/>
</dbReference>
<dbReference type="STRING" id="208964.PA1049"/>
<dbReference type="PaxDb" id="208964-PA1049"/>
<dbReference type="GeneID" id="881467"/>
<dbReference type="KEGG" id="pae:PA1049"/>
<dbReference type="PATRIC" id="fig|208964.12.peg.1085"/>
<dbReference type="PseudoCAP" id="PA1049"/>
<dbReference type="HOGENOM" id="CLU_032263_2_2_6"/>
<dbReference type="InParanoid" id="Q9I4S5"/>
<dbReference type="OrthoDB" id="9780392at2"/>
<dbReference type="PhylomeDB" id="Q9I4S5"/>
<dbReference type="BioCyc" id="PAER208964:G1FZ6-1071-MONOMER"/>
<dbReference type="UniPathway" id="UPA01068">
    <property type="reaction ID" value="UER00304"/>
</dbReference>
<dbReference type="UniPathway" id="UPA01068">
    <property type="reaction ID" value="UER00305"/>
</dbReference>
<dbReference type="Proteomes" id="UP000002438">
    <property type="component" value="Chromosome"/>
</dbReference>
<dbReference type="GO" id="GO:0010181">
    <property type="term" value="F:FMN binding"/>
    <property type="evidence" value="ECO:0007669"/>
    <property type="project" value="UniProtKB-UniRule"/>
</dbReference>
<dbReference type="GO" id="GO:0004733">
    <property type="term" value="F:pyridoxamine phosphate oxidase activity"/>
    <property type="evidence" value="ECO:0000318"/>
    <property type="project" value="GO_Central"/>
</dbReference>
<dbReference type="GO" id="GO:0042823">
    <property type="term" value="P:pyridoxal phosphate biosynthetic process"/>
    <property type="evidence" value="ECO:0000318"/>
    <property type="project" value="GO_Central"/>
</dbReference>
<dbReference type="GO" id="GO:0008615">
    <property type="term" value="P:pyridoxine biosynthetic process"/>
    <property type="evidence" value="ECO:0007669"/>
    <property type="project" value="UniProtKB-KW"/>
</dbReference>
<dbReference type="FunFam" id="2.30.110.10:FF:000011">
    <property type="entry name" value="Chromosome 7, whole genome shotgun sequence"/>
    <property type="match status" value="1"/>
</dbReference>
<dbReference type="Gene3D" id="2.30.110.10">
    <property type="entry name" value="Electron Transport, Fmn-binding Protein, Chain A"/>
    <property type="match status" value="1"/>
</dbReference>
<dbReference type="HAMAP" id="MF_01629">
    <property type="entry name" value="PdxH"/>
    <property type="match status" value="1"/>
</dbReference>
<dbReference type="InterPro" id="IPR000659">
    <property type="entry name" value="Pyridox_Oxase"/>
</dbReference>
<dbReference type="InterPro" id="IPR019740">
    <property type="entry name" value="Pyridox_Oxase_CS"/>
</dbReference>
<dbReference type="InterPro" id="IPR011576">
    <property type="entry name" value="Pyridox_Oxase_N"/>
</dbReference>
<dbReference type="InterPro" id="IPR019576">
    <property type="entry name" value="Pyridoxamine_oxidase_dimer_C"/>
</dbReference>
<dbReference type="InterPro" id="IPR012349">
    <property type="entry name" value="Split_barrel_FMN-bd"/>
</dbReference>
<dbReference type="NCBIfam" id="TIGR00558">
    <property type="entry name" value="pdxH"/>
    <property type="match status" value="1"/>
</dbReference>
<dbReference type="NCBIfam" id="NF004231">
    <property type="entry name" value="PRK05679.1"/>
    <property type="match status" value="1"/>
</dbReference>
<dbReference type="PANTHER" id="PTHR10851:SF0">
    <property type="entry name" value="PYRIDOXINE-5'-PHOSPHATE OXIDASE"/>
    <property type="match status" value="1"/>
</dbReference>
<dbReference type="PANTHER" id="PTHR10851">
    <property type="entry name" value="PYRIDOXINE-5-PHOSPHATE OXIDASE"/>
    <property type="match status" value="1"/>
</dbReference>
<dbReference type="Pfam" id="PF10590">
    <property type="entry name" value="PNP_phzG_C"/>
    <property type="match status" value="1"/>
</dbReference>
<dbReference type="Pfam" id="PF01243">
    <property type="entry name" value="PNPOx_N"/>
    <property type="match status" value="1"/>
</dbReference>
<dbReference type="PIRSF" id="PIRSF000190">
    <property type="entry name" value="Pyd_amn-ph_oxd"/>
    <property type="match status" value="1"/>
</dbReference>
<dbReference type="SUPFAM" id="SSF50475">
    <property type="entry name" value="FMN-binding split barrel"/>
    <property type="match status" value="1"/>
</dbReference>
<dbReference type="PROSITE" id="PS01064">
    <property type="entry name" value="PYRIDOX_OXIDASE"/>
    <property type="match status" value="1"/>
</dbReference>
<proteinExistence type="inferred from homology"/>
<sequence length="215" mass="24860">MTQSLADMRREYTRDGLSEANAPSDPFSLFRQWFDDAVKTERLPVEPNAMTLATVDADGYPHCRILLLKGLDERGFTFFTNYESAKGRQLAANPRAAMTFFWPALERQVRIEGSVEKVTPEESDAYYQVRPLGSRLGAWASPQSRVIADRAELERLLADTERRFADQPPSCPEHWGGYRLLPQRIEFWQGRPSRLHDRLDYRRQDGGWLRERLAP</sequence>
<comment type="function">
    <text evidence="1">Catalyzes the oxidation of either pyridoxine 5'-phosphate (PNP) or pyridoxamine 5'-phosphate (PMP) into pyridoxal 5'-phosphate (PLP).</text>
</comment>
<comment type="catalytic activity">
    <reaction evidence="1">
        <text>pyridoxamine 5'-phosphate + O2 + H2O = pyridoxal 5'-phosphate + H2O2 + NH4(+)</text>
        <dbReference type="Rhea" id="RHEA:15817"/>
        <dbReference type="ChEBI" id="CHEBI:15377"/>
        <dbReference type="ChEBI" id="CHEBI:15379"/>
        <dbReference type="ChEBI" id="CHEBI:16240"/>
        <dbReference type="ChEBI" id="CHEBI:28938"/>
        <dbReference type="ChEBI" id="CHEBI:58451"/>
        <dbReference type="ChEBI" id="CHEBI:597326"/>
        <dbReference type="EC" id="1.4.3.5"/>
    </reaction>
</comment>
<comment type="catalytic activity">
    <reaction evidence="1">
        <text>pyridoxine 5'-phosphate + O2 = pyridoxal 5'-phosphate + H2O2</text>
        <dbReference type="Rhea" id="RHEA:15149"/>
        <dbReference type="ChEBI" id="CHEBI:15379"/>
        <dbReference type="ChEBI" id="CHEBI:16240"/>
        <dbReference type="ChEBI" id="CHEBI:58589"/>
        <dbReference type="ChEBI" id="CHEBI:597326"/>
        <dbReference type="EC" id="1.4.3.5"/>
    </reaction>
</comment>
<comment type="cofactor">
    <cofactor evidence="1">
        <name>FMN</name>
        <dbReference type="ChEBI" id="CHEBI:58210"/>
    </cofactor>
    <text evidence="1">Binds 1 FMN per subunit.</text>
</comment>
<comment type="pathway">
    <text evidence="1">Cofactor metabolism; pyridoxal 5'-phosphate salvage; pyridoxal 5'-phosphate from pyridoxamine 5'-phosphate: step 1/1.</text>
</comment>
<comment type="pathway">
    <text evidence="1">Cofactor metabolism; pyridoxal 5'-phosphate salvage; pyridoxal 5'-phosphate from pyridoxine 5'-phosphate: step 1/1.</text>
</comment>
<comment type="subunit">
    <text evidence="1">Homodimer.</text>
</comment>
<comment type="similarity">
    <text evidence="1">Belongs to the pyridoxamine 5'-phosphate oxidase family.</text>
</comment>
<organism>
    <name type="scientific">Pseudomonas aeruginosa (strain ATCC 15692 / DSM 22644 / CIP 104116 / JCM 14847 / LMG 12228 / 1C / PRS 101 / PAO1)</name>
    <dbReference type="NCBI Taxonomy" id="208964"/>
    <lineage>
        <taxon>Bacteria</taxon>
        <taxon>Pseudomonadati</taxon>
        <taxon>Pseudomonadota</taxon>
        <taxon>Gammaproteobacteria</taxon>
        <taxon>Pseudomonadales</taxon>
        <taxon>Pseudomonadaceae</taxon>
        <taxon>Pseudomonas</taxon>
    </lineage>
</organism>
<keyword id="KW-0285">Flavoprotein</keyword>
<keyword id="KW-0288">FMN</keyword>
<keyword id="KW-0560">Oxidoreductase</keyword>
<keyword id="KW-0664">Pyridoxine biosynthesis</keyword>
<keyword id="KW-1185">Reference proteome</keyword>
<name>PDXH_PSEAE</name>
<gene>
    <name evidence="1" type="primary">pdxH</name>
    <name type="ordered locus">PA1049</name>
</gene>
<accession>Q9I4S5</accession>
<reference key="1">
    <citation type="journal article" date="2000" name="Nature">
        <title>Complete genome sequence of Pseudomonas aeruginosa PAO1, an opportunistic pathogen.</title>
        <authorList>
            <person name="Stover C.K."/>
            <person name="Pham X.-Q.T."/>
            <person name="Erwin A.L."/>
            <person name="Mizoguchi S.D."/>
            <person name="Warrener P."/>
            <person name="Hickey M.J."/>
            <person name="Brinkman F.S.L."/>
            <person name="Hufnagle W.O."/>
            <person name="Kowalik D.J."/>
            <person name="Lagrou M."/>
            <person name="Garber R.L."/>
            <person name="Goltry L."/>
            <person name="Tolentino E."/>
            <person name="Westbrock-Wadman S."/>
            <person name="Yuan Y."/>
            <person name="Brody L.L."/>
            <person name="Coulter S.N."/>
            <person name="Folger K.R."/>
            <person name="Kas A."/>
            <person name="Larbig K."/>
            <person name="Lim R.M."/>
            <person name="Smith K.A."/>
            <person name="Spencer D.H."/>
            <person name="Wong G.K.-S."/>
            <person name="Wu Z."/>
            <person name="Paulsen I.T."/>
            <person name="Reizer J."/>
            <person name="Saier M.H. Jr."/>
            <person name="Hancock R.E.W."/>
            <person name="Lory S."/>
            <person name="Olson M.V."/>
        </authorList>
    </citation>
    <scope>NUCLEOTIDE SEQUENCE [LARGE SCALE GENOMIC DNA]</scope>
    <source>
        <strain>ATCC 15692 / DSM 22644 / CIP 104116 / JCM 14847 / LMG 12228 / 1C / PRS 101 / PAO1</strain>
    </source>
</reference>
<feature type="chain" id="PRO_0000167736" description="Pyridoxine/pyridoxamine 5'-phosphate oxidase">
    <location>
        <begin position="1"/>
        <end position="215"/>
    </location>
</feature>
<feature type="binding site" evidence="1">
    <location>
        <begin position="9"/>
        <end position="12"/>
    </location>
    <ligand>
        <name>substrate</name>
    </ligand>
</feature>
<feature type="binding site" evidence="1">
    <location>
        <begin position="64"/>
        <end position="69"/>
    </location>
    <ligand>
        <name>FMN</name>
        <dbReference type="ChEBI" id="CHEBI:58210"/>
    </ligand>
</feature>
<feature type="binding site" evidence="1">
    <location>
        <position position="69"/>
    </location>
    <ligand>
        <name>substrate</name>
    </ligand>
</feature>
<feature type="binding site" evidence="1">
    <location>
        <begin position="79"/>
        <end position="80"/>
    </location>
    <ligand>
        <name>FMN</name>
        <dbReference type="ChEBI" id="CHEBI:58210"/>
    </ligand>
</feature>
<feature type="binding site" evidence="1">
    <location>
        <position position="86"/>
    </location>
    <ligand>
        <name>FMN</name>
        <dbReference type="ChEBI" id="CHEBI:58210"/>
    </ligand>
</feature>
<feature type="binding site" evidence="1">
    <location>
        <position position="108"/>
    </location>
    <ligand>
        <name>FMN</name>
        <dbReference type="ChEBI" id="CHEBI:58210"/>
    </ligand>
</feature>
<feature type="binding site" evidence="1">
    <location>
        <position position="126"/>
    </location>
    <ligand>
        <name>substrate</name>
    </ligand>
</feature>
<feature type="binding site" evidence="1">
    <location>
        <position position="130"/>
    </location>
    <ligand>
        <name>substrate</name>
    </ligand>
</feature>
<feature type="binding site" evidence="1">
    <location>
        <position position="134"/>
    </location>
    <ligand>
        <name>substrate</name>
    </ligand>
</feature>
<feature type="binding site" evidence="1">
    <location>
        <begin position="143"/>
        <end position="144"/>
    </location>
    <ligand>
        <name>FMN</name>
        <dbReference type="ChEBI" id="CHEBI:58210"/>
    </ligand>
</feature>
<feature type="binding site" evidence="1">
    <location>
        <position position="188"/>
    </location>
    <ligand>
        <name>FMN</name>
        <dbReference type="ChEBI" id="CHEBI:58210"/>
    </ligand>
</feature>
<feature type="binding site" evidence="1">
    <location>
        <begin position="194"/>
        <end position="196"/>
    </location>
    <ligand>
        <name>substrate</name>
    </ligand>
</feature>
<feature type="binding site" evidence="1">
    <location>
        <position position="198"/>
    </location>
    <ligand>
        <name>FMN</name>
        <dbReference type="ChEBI" id="CHEBI:58210"/>
    </ligand>
</feature>
<evidence type="ECO:0000255" key="1">
    <source>
        <dbReference type="HAMAP-Rule" id="MF_01629"/>
    </source>
</evidence>